<accession>P9WMR4</accession>
<accession>L0T6J2</accession>
<accession>P64314</accession>
<accession>Q10640</accession>
<reference key="1">
    <citation type="journal article" date="2002" name="J. Bacteriol.">
        <title>Whole-genome comparison of Mycobacterium tuberculosis clinical and laboratory strains.</title>
        <authorList>
            <person name="Fleischmann R.D."/>
            <person name="Alland D."/>
            <person name="Eisen J.A."/>
            <person name="Carpenter L."/>
            <person name="White O."/>
            <person name="Peterson J.D."/>
            <person name="DeBoy R.T."/>
            <person name="Dodson R.J."/>
            <person name="Gwinn M.L."/>
            <person name="Haft D.H."/>
            <person name="Hickey E.K."/>
            <person name="Kolonay J.F."/>
            <person name="Nelson W.C."/>
            <person name="Umayam L.A."/>
            <person name="Ermolaeva M.D."/>
            <person name="Salzberg S.L."/>
            <person name="Delcher A."/>
            <person name="Utterback T.R."/>
            <person name="Weidman J.F."/>
            <person name="Khouri H.M."/>
            <person name="Gill J."/>
            <person name="Mikula A."/>
            <person name="Bishai W."/>
            <person name="Jacobs W.R. Jr."/>
            <person name="Venter J.C."/>
            <person name="Fraser C.M."/>
        </authorList>
    </citation>
    <scope>NUCLEOTIDE SEQUENCE [LARGE SCALE GENOMIC DNA]</scope>
    <source>
        <strain>CDC 1551 / Oshkosh</strain>
    </source>
</reference>
<evidence type="ECO:0000250" key="1">
    <source>
        <dbReference type="UniProtKB" id="A5U229"/>
    </source>
</evidence>
<evidence type="ECO:0000255" key="2">
    <source>
        <dbReference type="PROSITE-ProRule" id="PRU00541"/>
    </source>
</evidence>
<evidence type="ECO:0000305" key="3"/>
<organism>
    <name type="scientific">Mycobacterium tuberculosis (strain CDC 1551 / Oshkosh)</name>
    <dbReference type="NCBI Taxonomy" id="83331"/>
    <lineage>
        <taxon>Bacteria</taxon>
        <taxon>Bacillati</taxon>
        <taxon>Actinomycetota</taxon>
        <taxon>Actinomycetes</taxon>
        <taxon>Mycobacteriales</taxon>
        <taxon>Mycobacteriaceae</taxon>
        <taxon>Mycobacterium</taxon>
        <taxon>Mycobacterium tuberculosis complex</taxon>
    </lineage>
</organism>
<protein>
    <recommendedName>
        <fullName evidence="1">ATP-dependent helicase DinG</fullName>
        <ecNumber evidence="1">5.6.2.3</ecNumber>
    </recommendedName>
    <alternativeName>
        <fullName evidence="3">DNA 5'-3' helicase DinG</fullName>
    </alternativeName>
</protein>
<feature type="chain" id="PRO_0000427256" description="ATP-dependent helicase DinG">
    <location>
        <begin position="1"/>
        <end position="664"/>
    </location>
</feature>
<feature type="domain" description="Helicase ATP-binding" evidence="2">
    <location>
        <begin position="14"/>
        <end position="290"/>
    </location>
</feature>
<feature type="short sequence motif" description="DEAH box">
    <location>
        <begin position="246"/>
        <end position="249"/>
    </location>
</feature>
<feature type="binding site" evidence="2">
    <location>
        <begin position="49"/>
        <end position="56"/>
    </location>
    <ligand>
        <name>ATP</name>
        <dbReference type="ChEBI" id="CHEBI:30616"/>
    </ligand>
</feature>
<feature type="binding site" evidence="1">
    <location>
        <position position="120"/>
    </location>
    <ligand>
        <name>[4Fe-4S] cluster</name>
        <dbReference type="ChEBI" id="CHEBI:49883"/>
    </ligand>
</feature>
<feature type="binding site" evidence="1">
    <location>
        <position position="192"/>
    </location>
    <ligand>
        <name>[4Fe-4S] cluster</name>
        <dbReference type="ChEBI" id="CHEBI:49883"/>
    </ligand>
</feature>
<feature type="binding site" evidence="1">
    <location>
        <position position="198"/>
    </location>
    <ligand>
        <name>[4Fe-4S] cluster</name>
        <dbReference type="ChEBI" id="CHEBI:49883"/>
    </ligand>
</feature>
<feature type="binding site" evidence="1">
    <location>
        <position position="204"/>
    </location>
    <ligand>
        <name>[4Fe-4S] cluster</name>
        <dbReference type="ChEBI" id="CHEBI:49883"/>
    </ligand>
</feature>
<dbReference type="EC" id="5.6.2.3" evidence="1"/>
<dbReference type="EMBL" id="AE000516">
    <property type="protein sequence ID" value="AAK45635.1"/>
    <property type="molecule type" value="Genomic_DNA"/>
</dbReference>
<dbReference type="PIR" id="E70770">
    <property type="entry name" value="E70770"/>
</dbReference>
<dbReference type="RefSeq" id="WP_003898827.1">
    <property type="nucleotide sequence ID" value="NZ_KK341227.1"/>
</dbReference>
<dbReference type="SMR" id="P9WMR4"/>
<dbReference type="GeneID" id="45425307"/>
<dbReference type="KEGG" id="mtc:MT1371"/>
<dbReference type="PATRIC" id="fig|83331.31.peg.1478"/>
<dbReference type="HOGENOM" id="CLU_012117_2_0_11"/>
<dbReference type="Proteomes" id="UP000001020">
    <property type="component" value="Chromosome"/>
</dbReference>
<dbReference type="GO" id="GO:0051539">
    <property type="term" value="F:4 iron, 4 sulfur cluster binding"/>
    <property type="evidence" value="ECO:0007669"/>
    <property type="project" value="UniProtKB-KW"/>
</dbReference>
<dbReference type="GO" id="GO:0005524">
    <property type="term" value="F:ATP binding"/>
    <property type="evidence" value="ECO:0007669"/>
    <property type="project" value="UniProtKB-KW"/>
</dbReference>
<dbReference type="GO" id="GO:0016887">
    <property type="term" value="F:ATP hydrolysis activity"/>
    <property type="evidence" value="ECO:0007669"/>
    <property type="project" value="RHEA"/>
</dbReference>
<dbReference type="GO" id="GO:0003677">
    <property type="term" value="F:DNA binding"/>
    <property type="evidence" value="ECO:0007669"/>
    <property type="project" value="UniProtKB-KW"/>
</dbReference>
<dbReference type="GO" id="GO:0003678">
    <property type="term" value="F:DNA helicase activity"/>
    <property type="evidence" value="ECO:0007669"/>
    <property type="project" value="TreeGrafter"/>
</dbReference>
<dbReference type="GO" id="GO:0046872">
    <property type="term" value="F:metal ion binding"/>
    <property type="evidence" value="ECO:0007669"/>
    <property type="project" value="UniProtKB-KW"/>
</dbReference>
<dbReference type="GO" id="GO:0006310">
    <property type="term" value="P:DNA recombination"/>
    <property type="evidence" value="ECO:0007669"/>
    <property type="project" value="UniProtKB-KW"/>
</dbReference>
<dbReference type="GO" id="GO:0006281">
    <property type="term" value="P:DNA repair"/>
    <property type="evidence" value="ECO:0007669"/>
    <property type="project" value="UniProtKB-KW"/>
</dbReference>
<dbReference type="FunFam" id="3.40.50.300:FF:000437">
    <property type="entry name" value="ATP-dependent DNA helicase DinG"/>
    <property type="match status" value="1"/>
</dbReference>
<dbReference type="Gene3D" id="3.40.50.300">
    <property type="entry name" value="P-loop containing nucleotide triphosphate hydrolases"/>
    <property type="match status" value="2"/>
</dbReference>
<dbReference type="InterPro" id="IPR006555">
    <property type="entry name" value="ATP-dep_Helicase_C"/>
</dbReference>
<dbReference type="InterPro" id="IPR011545">
    <property type="entry name" value="DEAD/DEAH_box_helicase_dom"/>
</dbReference>
<dbReference type="InterPro" id="IPR045028">
    <property type="entry name" value="DinG/Rad3-like"/>
</dbReference>
<dbReference type="InterPro" id="IPR014013">
    <property type="entry name" value="Helic_SF1/SF2_ATP-bd_DinG/Rad3"/>
</dbReference>
<dbReference type="InterPro" id="IPR014001">
    <property type="entry name" value="Helicase_ATP-bd"/>
</dbReference>
<dbReference type="InterPro" id="IPR027417">
    <property type="entry name" value="P-loop_NTPase"/>
</dbReference>
<dbReference type="PANTHER" id="PTHR11472">
    <property type="entry name" value="DNA REPAIR DEAD HELICASE RAD3/XP-D SUBFAMILY MEMBER"/>
    <property type="match status" value="1"/>
</dbReference>
<dbReference type="PANTHER" id="PTHR11472:SF34">
    <property type="entry name" value="REGULATOR OF TELOMERE ELONGATION HELICASE 1"/>
    <property type="match status" value="1"/>
</dbReference>
<dbReference type="Pfam" id="PF00270">
    <property type="entry name" value="DEAD"/>
    <property type="match status" value="1"/>
</dbReference>
<dbReference type="Pfam" id="PF13307">
    <property type="entry name" value="Helicase_C_2"/>
    <property type="match status" value="1"/>
</dbReference>
<dbReference type="SMART" id="SM00487">
    <property type="entry name" value="DEXDc"/>
    <property type="match status" value="1"/>
</dbReference>
<dbReference type="SMART" id="SM00491">
    <property type="entry name" value="HELICc2"/>
    <property type="match status" value="1"/>
</dbReference>
<dbReference type="SUPFAM" id="SSF52540">
    <property type="entry name" value="P-loop containing nucleoside triphosphate hydrolases"/>
    <property type="match status" value="2"/>
</dbReference>
<dbReference type="PROSITE" id="PS51193">
    <property type="entry name" value="HELICASE_ATP_BIND_2"/>
    <property type="match status" value="1"/>
</dbReference>
<sequence length="664" mass="70168">MSESVSMSVPELLAIAVAALGGTRRRGQQEMAAAVAHAFETGEHLVVQAGTGTGKSLAYLVPAIIRALCDDAPVVVSTATIALQRQLVDRDLPQLVDSLTNALPRRPKFALLKGRRNYLCLNKIHNSVTASDHDDERPQEELFDPVAVTALGRDVQRLTAWASTTVSGDRDDLKPGVGDRSWSQVSVSARECLGVARCPFGSECFSERARGAAGLADVVVTNHALLAIDAVAESAVLPEHRLLVVDEAHELADRVTSVAAAELTSATLGMAARRITRLVDPKVTQRLQAASATFSSAIHDARPGRIDCLDDEMATYLSALRDAASAARSAIDTGSDTTTASVRAEAGAVLTEISDTASRILASFAPAIPDRSDVVWLEHEDNHESARAVLRVAPLSVAELLATQVFARATTVLTSATLTIGGSFDAMATAWGLTADTPWRGLDVGSPFQHAKSGILYVAAHLPPPGRDGSGSAEQLTEIAELITAAGGRTLGLFSSMRAARAATEAMRERLSTPVLCQGDDSTSTLVEKFTADAATSLFGTLSLWQGVDVPGPSLSLVLIDRIPFPRPDDPLLSARQRAVAARGGNGFMTVAASHAALLLAQGSGRLLRRVTDRGVVAVLDSRMATARYGEFLRASLPPFWQTTNATQVRAALRRLARADAKAH</sequence>
<name>DING_MYCTO</name>
<comment type="function">
    <text evidence="1">A structure-dependent 5'-3' DNA helicase that unwinds a number of substrates that resemble intermediates in DNA repair, recombination and replication. Translocates on ssDNA with 5'-3' polarity.</text>
</comment>
<comment type="function">
    <text evidence="1">Unwinds G4 DNA (planar arrays of 4 guanine bases stabilized by hydrogen bonds) with both 5'- and 3'- ss-tails.</text>
</comment>
<comment type="catalytic activity">
    <reaction evidence="1">
        <text>Couples ATP hydrolysis with the unwinding of duplex DNA at the replication fork by translocating in the 5'-3' direction. This creates two antiparallel DNA single strands (ssDNA). The leading ssDNA polymer is the template for DNA polymerase III holoenzyme which synthesizes a continuous strand.</text>
        <dbReference type="EC" id="5.6.2.3"/>
    </reaction>
</comment>
<comment type="catalytic activity">
    <reaction evidence="1">
        <text>ATP + H2O = ADP + phosphate + H(+)</text>
        <dbReference type="Rhea" id="RHEA:13065"/>
        <dbReference type="ChEBI" id="CHEBI:15377"/>
        <dbReference type="ChEBI" id="CHEBI:15378"/>
        <dbReference type="ChEBI" id="CHEBI:30616"/>
        <dbReference type="ChEBI" id="CHEBI:43474"/>
        <dbReference type="ChEBI" id="CHEBI:456216"/>
        <dbReference type="EC" id="5.6.2.3"/>
    </reaction>
</comment>
<comment type="cofactor">
    <cofactor evidence="1">
        <name>[4Fe-4S] cluster</name>
        <dbReference type="ChEBI" id="CHEBI:49883"/>
    </cofactor>
</comment>
<comment type="similarity">
    <text evidence="3">Belongs to the helicase family. DinG subfamily.</text>
</comment>
<proteinExistence type="inferred from homology"/>
<gene>
    <name type="primary">dinG</name>
    <name type="ordered locus">MT1371</name>
</gene>
<keyword id="KW-0004">4Fe-4S</keyword>
<keyword id="KW-0067">ATP-binding</keyword>
<keyword id="KW-0227">DNA damage</keyword>
<keyword id="KW-0233">DNA recombination</keyword>
<keyword id="KW-0234">DNA repair</keyword>
<keyword id="KW-0238">DNA-binding</keyword>
<keyword id="KW-0347">Helicase</keyword>
<keyword id="KW-0378">Hydrolase</keyword>
<keyword id="KW-0408">Iron</keyword>
<keyword id="KW-0411">Iron-sulfur</keyword>
<keyword id="KW-0413">Isomerase</keyword>
<keyword id="KW-0479">Metal-binding</keyword>
<keyword id="KW-0547">Nucleotide-binding</keyword>
<keyword id="KW-1185">Reference proteome</keyword>